<sequence>MSNFLRKKLHLCFSSSGGLSPSIPSSPIIVSNHNAQSHPHHTPSIFINNFNSLYDQLSVSSPLHRRHSSENPAGVFSTNRREEEEEDETTTSVSKLLSGGTAIMKHIESPDPYRDFGRSMREMVEARDLTRDVVADREYLHELLFCYLYLNPKHTHRFIVSAFADTLLWLLSPSPSPEHFLS</sequence>
<reference key="1">
    <citation type="journal article" date="1998" name="Nature">
        <title>Analysis of 1.9 Mb of contiguous sequence from chromosome 4 of Arabidopsis thaliana.</title>
        <authorList>
            <person name="Bevan M."/>
            <person name="Bancroft I."/>
            <person name="Bent E."/>
            <person name="Love K."/>
            <person name="Goodman H.M."/>
            <person name="Dean C."/>
            <person name="Bergkamp R."/>
            <person name="Dirkse W."/>
            <person name="van Staveren M."/>
            <person name="Stiekema W."/>
            <person name="Drost L."/>
            <person name="Ridley P."/>
            <person name="Hudson S.-A."/>
            <person name="Patel K."/>
            <person name="Murphy G."/>
            <person name="Piffanelli P."/>
            <person name="Wedler H."/>
            <person name="Wedler E."/>
            <person name="Wambutt R."/>
            <person name="Weitzenegger T."/>
            <person name="Pohl T."/>
            <person name="Terryn N."/>
            <person name="Gielen J."/>
            <person name="Villarroel R."/>
            <person name="De Clercq R."/>
            <person name="van Montagu M."/>
            <person name="Lecharny A."/>
            <person name="Aubourg S."/>
            <person name="Gy I."/>
            <person name="Kreis M."/>
            <person name="Lao N."/>
            <person name="Kavanagh T."/>
            <person name="Hempel S."/>
            <person name="Kotter P."/>
            <person name="Entian K.-D."/>
            <person name="Rieger M."/>
            <person name="Schaefer M."/>
            <person name="Funk B."/>
            <person name="Mueller-Auer S."/>
            <person name="Silvey M."/>
            <person name="James R."/>
            <person name="Monfort A."/>
            <person name="Pons A."/>
            <person name="Puigdomenech P."/>
            <person name="Douka A."/>
            <person name="Voukelatou E."/>
            <person name="Milioni D."/>
            <person name="Hatzopoulos P."/>
            <person name="Piravandi E."/>
            <person name="Obermaier B."/>
            <person name="Hilbert H."/>
            <person name="Duesterhoeft A."/>
            <person name="Moores T."/>
            <person name="Jones J.D.G."/>
            <person name="Eneva T."/>
            <person name="Palme K."/>
            <person name="Benes V."/>
            <person name="Rechmann S."/>
            <person name="Ansorge W."/>
            <person name="Cooke R."/>
            <person name="Berger C."/>
            <person name="Delseny M."/>
            <person name="Voet M."/>
            <person name="Volckaert G."/>
            <person name="Mewes H.-W."/>
            <person name="Klosterman S."/>
            <person name="Schueller C."/>
            <person name="Chalwatzis N."/>
        </authorList>
    </citation>
    <scope>NUCLEOTIDE SEQUENCE [LARGE SCALE GENOMIC DNA]</scope>
    <source>
        <strain>cv. Columbia</strain>
    </source>
</reference>
<reference key="2">
    <citation type="journal article" date="1999" name="Nature">
        <title>Sequence and analysis of chromosome 4 of the plant Arabidopsis thaliana.</title>
        <authorList>
            <person name="Mayer K.F.X."/>
            <person name="Schueller C."/>
            <person name="Wambutt R."/>
            <person name="Murphy G."/>
            <person name="Volckaert G."/>
            <person name="Pohl T."/>
            <person name="Duesterhoeft A."/>
            <person name="Stiekema W."/>
            <person name="Entian K.-D."/>
            <person name="Terryn N."/>
            <person name="Harris B."/>
            <person name="Ansorge W."/>
            <person name="Brandt P."/>
            <person name="Grivell L.A."/>
            <person name="Rieger M."/>
            <person name="Weichselgartner M."/>
            <person name="de Simone V."/>
            <person name="Obermaier B."/>
            <person name="Mache R."/>
            <person name="Mueller M."/>
            <person name="Kreis M."/>
            <person name="Delseny M."/>
            <person name="Puigdomenech P."/>
            <person name="Watson M."/>
            <person name="Schmidtheini T."/>
            <person name="Reichert B."/>
            <person name="Portetelle D."/>
            <person name="Perez-Alonso M."/>
            <person name="Boutry M."/>
            <person name="Bancroft I."/>
            <person name="Vos P."/>
            <person name="Hoheisel J."/>
            <person name="Zimmermann W."/>
            <person name="Wedler H."/>
            <person name="Ridley P."/>
            <person name="Langham S.-A."/>
            <person name="McCullagh B."/>
            <person name="Bilham L."/>
            <person name="Robben J."/>
            <person name="van der Schueren J."/>
            <person name="Grymonprez B."/>
            <person name="Chuang Y.-J."/>
            <person name="Vandenbussche F."/>
            <person name="Braeken M."/>
            <person name="Weltjens I."/>
            <person name="Voet M."/>
            <person name="Bastiaens I."/>
            <person name="Aert R."/>
            <person name="Defoor E."/>
            <person name="Weitzenegger T."/>
            <person name="Bothe G."/>
            <person name="Ramsperger U."/>
            <person name="Hilbert H."/>
            <person name="Braun M."/>
            <person name="Holzer E."/>
            <person name="Brandt A."/>
            <person name="Peters S."/>
            <person name="van Staveren M."/>
            <person name="Dirkse W."/>
            <person name="Mooijman P."/>
            <person name="Klein Lankhorst R."/>
            <person name="Rose M."/>
            <person name="Hauf J."/>
            <person name="Koetter P."/>
            <person name="Berneiser S."/>
            <person name="Hempel S."/>
            <person name="Feldpausch M."/>
            <person name="Lamberth S."/>
            <person name="Van den Daele H."/>
            <person name="De Keyser A."/>
            <person name="Buysshaert C."/>
            <person name="Gielen J."/>
            <person name="Villarroel R."/>
            <person name="De Clercq R."/>
            <person name="van Montagu M."/>
            <person name="Rogers J."/>
            <person name="Cronin A."/>
            <person name="Quail M.A."/>
            <person name="Bray-Allen S."/>
            <person name="Clark L."/>
            <person name="Doggett J."/>
            <person name="Hall S."/>
            <person name="Kay M."/>
            <person name="Lennard N."/>
            <person name="McLay K."/>
            <person name="Mayes R."/>
            <person name="Pettett A."/>
            <person name="Rajandream M.A."/>
            <person name="Lyne M."/>
            <person name="Benes V."/>
            <person name="Rechmann S."/>
            <person name="Borkova D."/>
            <person name="Bloecker H."/>
            <person name="Scharfe M."/>
            <person name="Grimm M."/>
            <person name="Loehnert T.-H."/>
            <person name="Dose S."/>
            <person name="de Haan M."/>
            <person name="Maarse A.C."/>
            <person name="Schaefer M."/>
            <person name="Mueller-Auer S."/>
            <person name="Gabel C."/>
            <person name="Fuchs M."/>
            <person name="Fartmann B."/>
            <person name="Granderath K."/>
            <person name="Dauner D."/>
            <person name="Herzl A."/>
            <person name="Neumann S."/>
            <person name="Argiriou A."/>
            <person name="Vitale D."/>
            <person name="Liguori R."/>
            <person name="Piravandi E."/>
            <person name="Massenet O."/>
            <person name="Quigley F."/>
            <person name="Clabauld G."/>
            <person name="Muendlein A."/>
            <person name="Felber R."/>
            <person name="Schnabl S."/>
            <person name="Hiller R."/>
            <person name="Schmidt W."/>
            <person name="Lecharny A."/>
            <person name="Aubourg S."/>
            <person name="Chefdor F."/>
            <person name="Cooke R."/>
            <person name="Berger C."/>
            <person name="Monfort A."/>
            <person name="Casacuberta E."/>
            <person name="Gibbons T."/>
            <person name="Weber N."/>
            <person name="Vandenbol M."/>
            <person name="Bargues M."/>
            <person name="Terol J."/>
            <person name="Torres A."/>
            <person name="Perez-Perez A."/>
            <person name="Purnelle B."/>
            <person name="Bent E."/>
            <person name="Johnson S."/>
            <person name="Tacon D."/>
            <person name="Jesse T."/>
            <person name="Heijnen L."/>
            <person name="Schwarz S."/>
            <person name="Scholler P."/>
            <person name="Heber S."/>
            <person name="Francs P."/>
            <person name="Bielke C."/>
            <person name="Frishman D."/>
            <person name="Haase D."/>
            <person name="Lemcke K."/>
            <person name="Mewes H.-W."/>
            <person name="Stocker S."/>
            <person name="Zaccaria P."/>
            <person name="Bevan M."/>
            <person name="Wilson R.K."/>
            <person name="de la Bastide M."/>
            <person name="Habermann K."/>
            <person name="Parnell L."/>
            <person name="Dedhia N."/>
            <person name="Gnoj L."/>
            <person name="Schutz K."/>
            <person name="Huang E."/>
            <person name="Spiegel L."/>
            <person name="Sekhon M."/>
            <person name="Murray J."/>
            <person name="Sheet P."/>
            <person name="Cordes M."/>
            <person name="Abu-Threideh J."/>
            <person name="Stoneking T."/>
            <person name="Kalicki J."/>
            <person name="Graves T."/>
            <person name="Harmon G."/>
            <person name="Edwards J."/>
            <person name="Latreille P."/>
            <person name="Courtney L."/>
            <person name="Cloud J."/>
            <person name="Abbott A."/>
            <person name="Scott K."/>
            <person name="Johnson D."/>
            <person name="Minx P."/>
            <person name="Bentley D."/>
            <person name="Fulton B."/>
            <person name="Miller N."/>
            <person name="Greco T."/>
            <person name="Kemp K."/>
            <person name="Kramer J."/>
            <person name="Fulton L."/>
            <person name="Mardis E."/>
            <person name="Dante M."/>
            <person name="Pepin K."/>
            <person name="Hillier L.W."/>
            <person name="Nelson J."/>
            <person name="Spieth J."/>
            <person name="Ryan E."/>
            <person name="Andrews S."/>
            <person name="Geisel C."/>
            <person name="Layman D."/>
            <person name="Du H."/>
            <person name="Ali J."/>
            <person name="Berghoff A."/>
            <person name="Jones K."/>
            <person name="Drone K."/>
            <person name="Cotton M."/>
            <person name="Joshu C."/>
            <person name="Antonoiu B."/>
            <person name="Zidanic M."/>
            <person name="Strong C."/>
            <person name="Sun H."/>
            <person name="Lamar B."/>
            <person name="Yordan C."/>
            <person name="Ma P."/>
            <person name="Zhong J."/>
            <person name="Preston R."/>
            <person name="Vil D."/>
            <person name="Shekher M."/>
            <person name="Matero A."/>
            <person name="Shah R."/>
            <person name="Swaby I.K."/>
            <person name="O'Shaughnessy A."/>
            <person name="Rodriguez M."/>
            <person name="Hoffman J."/>
            <person name="Till S."/>
            <person name="Granat S."/>
            <person name="Shohdy N."/>
            <person name="Hasegawa A."/>
            <person name="Hameed A."/>
            <person name="Lodhi M."/>
            <person name="Johnson A."/>
            <person name="Chen E."/>
            <person name="Marra M.A."/>
            <person name="Martienssen R."/>
            <person name="McCombie W.R."/>
        </authorList>
    </citation>
    <scope>NUCLEOTIDE SEQUENCE [LARGE SCALE GENOMIC DNA]</scope>
    <source>
        <strain>cv. Columbia</strain>
    </source>
</reference>
<reference key="3">
    <citation type="journal article" date="2017" name="Plant J.">
        <title>Araport11: a complete reannotation of the Arabidopsis thaliana reference genome.</title>
        <authorList>
            <person name="Cheng C.Y."/>
            <person name="Krishnakumar V."/>
            <person name="Chan A.P."/>
            <person name="Thibaud-Nissen F."/>
            <person name="Schobel S."/>
            <person name="Town C.D."/>
        </authorList>
    </citation>
    <scope>GENOME REANNOTATION</scope>
    <source>
        <strain>cv. Columbia</strain>
    </source>
</reference>
<reference key="4">
    <citation type="journal article" date="2011" name="PLoS ONE">
        <title>Arabidopsis ovate family proteins, a novel transcriptional repressor family, control multiple aspects of plant growth and development.</title>
        <authorList>
            <person name="Wang S."/>
            <person name="Chang Y."/>
            <person name="Guo J."/>
            <person name="Zeng Q."/>
            <person name="Ellis B.E."/>
            <person name="Chen J.G."/>
        </authorList>
    </citation>
    <scope>FUNCTION</scope>
    <scope>TISSUE SPECIFICITY</scope>
    <scope>GENE FAMILY</scope>
</reference>
<accession>O23341</accession>
<protein>
    <recommendedName>
        <fullName>Transcription repressor OFP11</fullName>
    </recommendedName>
    <alternativeName>
        <fullName>Ovate family protein 11</fullName>
        <shortName>AtOFP11</shortName>
    </alternativeName>
</protein>
<keyword id="KW-0539">Nucleus</keyword>
<keyword id="KW-1185">Reference proteome</keyword>
<keyword id="KW-0678">Repressor</keyword>
<keyword id="KW-0804">Transcription</keyword>
<keyword id="KW-0805">Transcription regulation</keyword>
<dbReference type="EMBL" id="Z97337">
    <property type="protein sequence ID" value="CAB10265.1"/>
    <property type="molecule type" value="Genomic_DNA"/>
</dbReference>
<dbReference type="EMBL" id="AL161540">
    <property type="protein sequence ID" value="CAB78528.1"/>
    <property type="molecule type" value="Genomic_DNA"/>
</dbReference>
<dbReference type="EMBL" id="CP002687">
    <property type="protein sequence ID" value="AEE83510.1"/>
    <property type="molecule type" value="Genomic_DNA"/>
</dbReference>
<dbReference type="PIR" id="G71411">
    <property type="entry name" value="G71411"/>
</dbReference>
<dbReference type="RefSeq" id="NP_193222.1">
    <property type="nucleotide sequence ID" value="NM_117572.2"/>
</dbReference>
<dbReference type="STRING" id="3702.O23341"/>
<dbReference type="PaxDb" id="3702-AT4G14860.1"/>
<dbReference type="EnsemblPlants" id="AT4G14860.1">
    <property type="protein sequence ID" value="AT4G14860.1"/>
    <property type="gene ID" value="AT4G14860"/>
</dbReference>
<dbReference type="GeneID" id="827143"/>
<dbReference type="Gramene" id="AT4G14860.1">
    <property type="protein sequence ID" value="AT4G14860.1"/>
    <property type="gene ID" value="AT4G14860"/>
</dbReference>
<dbReference type="KEGG" id="ath:AT4G14860"/>
<dbReference type="Araport" id="AT4G14860"/>
<dbReference type="TAIR" id="AT4G14860">
    <property type="gene designation" value="OFP11"/>
</dbReference>
<dbReference type="eggNOG" id="ENOG502S0CD">
    <property type="taxonomic scope" value="Eukaryota"/>
</dbReference>
<dbReference type="HOGENOM" id="CLU_069722_1_0_1"/>
<dbReference type="InParanoid" id="O23341"/>
<dbReference type="OMA" id="NHNSQCP"/>
<dbReference type="PhylomeDB" id="O23341"/>
<dbReference type="PRO" id="PR:O23341"/>
<dbReference type="Proteomes" id="UP000006548">
    <property type="component" value="Chromosome 4"/>
</dbReference>
<dbReference type="ExpressionAtlas" id="O23341">
    <property type="expression patterns" value="baseline and differential"/>
</dbReference>
<dbReference type="GO" id="GO:0005634">
    <property type="term" value="C:nucleus"/>
    <property type="evidence" value="ECO:0007669"/>
    <property type="project" value="UniProtKB-SubCell"/>
</dbReference>
<dbReference type="GO" id="GO:0045892">
    <property type="term" value="P:negative regulation of DNA-templated transcription"/>
    <property type="evidence" value="ECO:0000314"/>
    <property type="project" value="TAIR"/>
</dbReference>
<dbReference type="InterPro" id="IPR038933">
    <property type="entry name" value="Ovate"/>
</dbReference>
<dbReference type="InterPro" id="IPR006458">
    <property type="entry name" value="Ovate_C"/>
</dbReference>
<dbReference type="NCBIfam" id="TIGR01568">
    <property type="entry name" value="A_thal_3678"/>
    <property type="match status" value="1"/>
</dbReference>
<dbReference type="PANTHER" id="PTHR33057:SF196">
    <property type="entry name" value="TRANSCRIPTION REPRESSOR OFP11"/>
    <property type="match status" value="1"/>
</dbReference>
<dbReference type="PANTHER" id="PTHR33057">
    <property type="entry name" value="TRANSCRIPTION REPRESSOR OFP7-RELATED"/>
    <property type="match status" value="1"/>
</dbReference>
<dbReference type="Pfam" id="PF04844">
    <property type="entry name" value="Ovate"/>
    <property type="match status" value="1"/>
</dbReference>
<dbReference type="PROSITE" id="PS51754">
    <property type="entry name" value="OVATE"/>
    <property type="match status" value="1"/>
</dbReference>
<organism>
    <name type="scientific">Arabidopsis thaliana</name>
    <name type="common">Mouse-ear cress</name>
    <dbReference type="NCBI Taxonomy" id="3702"/>
    <lineage>
        <taxon>Eukaryota</taxon>
        <taxon>Viridiplantae</taxon>
        <taxon>Streptophyta</taxon>
        <taxon>Embryophyta</taxon>
        <taxon>Tracheophyta</taxon>
        <taxon>Spermatophyta</taxon>
        <taxon>Magnoliopsida</taxon>
        <taxon>eudicotyledons</taxon>
        <taxon>Gunneridae</taxon>
        <taxon>Pentapetalae</taxon>
        <taxon>rosids</taxon>
        <taxon>malvids</taxon>
        <taxon>Brassicales</taxon>
        <taxon>Brassicaceae</taxon>
        <taxon>Camelineae</taxon>
        <taxon>Arabidopsis</taxon>
    </lineage>
</organism>
<evidence type="ECO:0000250" key="1"/>
<evidence type="ECO:0000255" key="2">
    <source>
        <dbReference type="PROSITE-ProRule" id="PRU01090"/>
    </source>
</evidence>
<evidence type="ECO:0000256" key="3">
    <source>
        <dbReference type="SAM" id="MobiDB-lite"/>
    </source>
</evidence>
<evidence type="ECO:0000269" key="4">
    <source>
    </source>
</evidence>
<evidence type="ECO:0000305" key="5">
    <source>
    </source>
</evidence>
<proteinExistence type="evidence at transcript level"/>
<comment type="function">
    <text evidence="4">Transcriptional repressor that may regulate multiple aspects of plant growth and development through the regulation of BEL1-LIKE (BLH) and KNOX TALE (KNAT) homeodomain transcription factors.</text>
</comment>
<comment type="subcellular location">
    <subcellularLocation>
        <location evidence="1">Nucleus</location>
    </subcellularLocation>
</comment>
<comment type="tissue specificity">
    <text evidence="4">Expressed in roots, rosette and cauline leaves, shoots, stems, flower buds and siliques.</text>
</comment>
<comment type="miscellaneous">
    <text evidence="5">Plants over-expressing OFP11 have no visible phenotype.</text>
</comment>
<name>OFP11_ARATH</name>
<gene>
    <name type="primary">OFP11</name>
    <name type="ordered locus">At4g14860</name>
    <name type="ORF">dl3470w</name>
    <name type="ORF">FCAALL.337</name>
</gene>
<feature type="chain" id="PRO_0000429680" description="Transcription repressor OFP11">
    <location>
        <begin position="1"/>
        <end position="182"/>
    </location>
</feature>
<feature type="domain" description="OVATE" evidence="2">
    <location>
        <begin position="104"/>
        <end position="169"/>
    </location>
</feature>
<feature type="region of interest" description="Disordered" evidence="3">
    <location>
        <begin position="62"/>
        <end position="94"/>
    </location>
</feature>